<feature type="chain" id="PRO_0000361117" description="Putative S-adenosyl-L-methionine-dependent methyltransferase MAV_5150">
    <location>
        <begin position="1"/>
        <end position="313"/>
    </location>
</feature>
<feature type="binding site" evidence="1">
    <location>
        <position position="139"/>
    </location>
    <ligand>
        <name>S-adenosyl-L-methionine</name>
        <dbReference type="ChEBI" id="CHEBI:59789"/>
    </ligand>
</feature>
<feature type="binding site" evidence="1">
    <location>
        <begin position="168"/>
        <end position="169"/>
    </location>
    <ligand>
        <name>S-adenosyl-L-methionine</name>
        <dbReference type="ChEBI" id="CHEBI:59789"/>
    </ligand>
</feature>
<accession>A0QMX9</accession>
<dbReference type="EC" id="2.1.1.-"/>
<dbReference type="EMBL" id="CP000479">
    <property type="protein sequence ID" value="ABK68682.1"/>
    <property type="molecule type" value="Genomic_DNA"/>
</dbReference>
<dbReference type="RefSeq" id="WP_009979787.1">
    <property type="nucleotide sequence ID" value="NC_008595.1"/>
</dbReference>
<dbReference type="SMR" id="A0QMX9"/>
<dbReference type="KEGG" id="mav:MAV_5150"/>
<dbReference type="HOGENOM" id="CLU_056160_2_1_11"/>
<dbReference type="Proteomes" id="UP000001574">
    <property type="component" value="Chromosome"/>
</dbReference>
<dbReference type="GO" id="GO:0008168">
    <property type="term" value="F:methyltransferase activity"/>
    <property type="evidence" value="ECO:0007669"/>
    <property type="project" value="UniProtKB-KW"/>
</dbReference>
<dbReference type="GO" id="GO:0032259">
    <property type="term" value="P:methylation"/>
    <property type="evidence" value="ECO:0007669"/>
    <property type="project" value="UniProtKB-KW"/>
</dbReference>
<dbReference type="Gene3D" id="3.40.50.150">
    <property type="entry name" value="Vaccinia Virus protein VP39"/>
    <property type="match status" value="1"/>
</dbReference>
<dbReference type="InterPro" id="IPR007213">
    <property type="entry name" value="Ppm1/Ppm2/Tcmp"/>
</dbReference>
<dbReference type="InterPro" id="IPR029063">
    <property type="entry name" value="SAM-dependent_MTases_sf"/>
</dbReference>
<dbReference type="InterPro" id="IPR011610">
    <property type="entry name" value="SAM_mthyl_Trfase_ML2640-like"/>
</dbReference>
<dbReference type="NCBIfam" id="TIGR00027">
    <property type="entry name" value="mthyl_TIGR00027"/>
    <property type="match status" value="1"/>
</dbReference>
<dbReference type="PANTHER" id="PTHR43619">
    <property type="entry name" value="S-ADENOSYL-L-METHIONINE-DEPENDENT METHYLTRANSFERASE YKTD-RELATED"/>
    <property type="match status" value="1"/>
</dbReference>
<dbReference type="PANTHER" id="PTHR43619:SF2">
    <property type="entry name" value="S-ADENOSYL-L-METHIONINE-DEPENDENT METHYLTRANSFERASES SUPERFAMILY PROTEIN"/>
    <property type="match status" value="1"/>
</dbReference>
<dbReference type="Pfam" id="PF04072">
    <property type="entry name" value="LCM"/>
    <property type="match status" value="1"/>
</dbReference>
<dbReference type="SUPFAM" id="SSF53335">
    <property type="entry name" value="S-adenosyl-L-methionine-dependent methyltransferases"/>
    <property type="match status" value="1"/>
</dbReference>
<comment type="function">
    <text evidence="1">Exhibits S-adenosyl-L-methionine-dependent methyltransferase activity.</text>
</comment>
<comment type="similarity">
    <text evidence="2">Belongs to the UPF0677 family.</text>
</comment>
<keyword id="KW-0489">Methyltransferase</keyword>
<keyword id="KW-0949">S-adenosyl-L-methionine</keyword>
<keyword id="KW-0808">Transferase</keyword>
<protein>
    <recommendedName>
        <fullName>Putative S-adenosyl-L-methionine-dependent methyltransferase MAV_5150</fullName>
        <ecNumber>2.1.1.-</ecNumber>
    </recommendedName>
</protein>
<name>Y5150_MYCA1</name>
<sequence length="313" mass="34068">MTDLDSSLPPSVRTAGDSWTITELVGATALGVAAARAAETAGPDPLIRDEFAGLLVSSAGPAWARLADPEQSWLDDDPHGKRAHRVGIDYQAVRTHYFDEYFDGALRAGIRQVVILAAGLDSRAYRLNWPAGTTVYEIDQPKVLEYKTETLQRHGATPAAVRRPVPVDLRDDWPAALTAAGFQAARPTAWLAEGLLPYLPSDAQDRLFEMVTALSAAGSQVAVEVFGMNSRSNAQRWLRMRERLGLDVNVAALTYHEPDRSDAAAWLTGHGWRVHSVDNRDEMARLGRPVPEDLSDEAVRSTLLRAHLGGSTG</sequence>
<gene>
    <name type="ordered locus">MAV_5150</name>
</gene>
<proteinExistence type="inferred from homology"/>
<reference key="1">
    <citation type="submission" date="2006-10" db="EMBL/GenBank/DDBJ databases">
        <authorList>
            <person name="Fleischmann R.D."/>
            <person name="Dodson R.J."/>
            <person name="Haft D.H."/>
            <person name="Merkel J.S."/>
            <person name="Nelson W.C."/>
            <person name="Fraser C.M."/>
        </authorList>
    </citation>
    <scope>NUCLEOTIDE SEQUENCE [LARGE SCALE GENOMIC DNA]</scope>
    <source>
        <strain>104</strain>
    </source>
</reference>
<evidence type="ECO:0000250" key="1"/>
<evidence type="ECO:0000305" key="2"/>
<organism>
    <name type="scientific">Mycobacterium avium (strain 104)</name>
    <dbReference type="NCBI Taxonomy" id="243243"/>
    <lineage>
        <taxon>Bacteria</taxon>
        <taxon>Bacillati</taxon>
        <taxon>Actinomycetota</taxon>
        <taxon>Actinomycetes</taxon>
        <taxon>Mycobacteriales</taxon>
        <taxon>Mycobacteriaceae</taxon>
        <taxon>Mycobacterium</taxon>
        <taxon>Mycobacterium avium complex (MAC)</taxon>
    </lineage>
</organism>